<evidence type="ECO:0000250" key="1">
    <source>
        <dbReference type="UniProtKB" id="Q9F5I8"/>
    </source>
</evidence>
<evidence type="ECO:0000255" key="2"/>
<evidence type="ECO:0000269" key="3">
    <source>
    </source>
</evidence>
<evidence type="ECO:0000305" key="4"/>
<evidence type="ECO:0000312" key="5">
    <source>
        <dbReference type="EMBL" id="CAC07822.1"/>
    </source>
</evidence>
<sequence>MKLQFKPVYLASIAIMAIGCTKEVTENDTSEISEVPTELRAAASSFYTPPGQNVRANKKNLVTDYGVNHNDQNDDSSKLNLAIKDLSDTGGILTLPKGKYYLTKIRMRSNVHLEIEKGTVIYPTKGLTPAKNHRIFDFASKTEEKIENASIVGKGGKFIVDLRGNSSKNQIVADVGNVTNFKISNFTIKDEKTIFASILVSFTDKAGNAWPHKGIIENIDQANAHTGYGLIQAYAADNILFNNLSCTGGVTLRLETDNLAMKTAKKGGVRDIFATKIKNTNGLTPVMFSPHFMENGKVTIDDVTAIGCAYAVRVEHGFIEIFDKGNRASADAFKNYIEGILGAGSVEVVYKRNNGRTWAARIANDFNEAAYNHSNPAVSGIKPGKFATSKVTNVKATYKGTGAKLKQAFLSYLPCSERSKVCRPGPDGFEYNGPSLGVTIDNTKRDNSLGNYNVNVSTSSVQGFPNNYVLNVKYNTPKVCNQNLGSITSCN</sequence>
<organism>
    <name type="scientific">Zobellia galactanivorans (strain DSM 12802 / CCUG 47099 / CIP 106680 / NCIMB 13871 / Dsij)</name>
    <dbReference type="NCBI Taxonomy" id="63186"/>
    <lineage>
        <taxon>Bacteria</taxon>
        <taxon>Pseudomonadati</taxon>
        <taxon>Bacteroidota</taxon>
        <taxon>Flavobacteriia</taxon>
        <taxon>Flavobacteriales</taxon>
        <taxon>Flavobacteriaceae</taxon>
        <taxon>Zobellia</taxon>
    </lineage>
</organism>
<dbReference type="EC" id="3.2.1.157"/>
<dbReference type="EMBL" id="AJ272071">
    <property type="protein sequence ID" value="CAC07822.1"/>
    <property type="molecule type" value="Genomic_DNA"/>
</dbReference>
<dbReference type="EMBL" id="FP476056">
    <property type="protein sequence ID" value="CAZ98400.1"/>
    <property type="molecule type" value="Genomic_DNA"/>
</dbReference>
<dbReference type="RefSeq" id="WP_013995588.1">
    <property type="nucleotide sequence ID" value="NC_015844.1"/>
</dbReference>
<dbReference type="SMR" id="Q9F284"/>
<dbReference type="CAZy" id="GH82">
    <property type="family name" value="Glycoside Hydrolase Family 82"/>
</dbReference>
<dbReference type="KEGG" id="zga:ZOBELLIA_4265"/>
<dbReference type="PATRIC" id="fig|63186.3.peg.4175"/>
<dbReference type="HOGENOM" id="CLU_555168_0_0_10"/>
<dbReference type="OrthoDB" id="6376028at2"/>
<dbReference type="BioCyc" id="MetaCyc:MONOMER-16653"/>
<dbReference type="BRENDA" id="3.2.1.157">
    <property type="organism ID" value="7557"/>
</dbReference>
<dbReference type="Proteomes" id="UP000008898">
    <property type="component" value="Chromosome"/>
</dbReference>
<dbReference type="GO" id="GO:0005576">
    <property type="term" value="C:extracellular region"/>
    <property type="evidence" value="ECO:0007669"/>
    <property type="project" value="UniProtKB-SubCell"/>
</dbReference>
<dbReference type="GO" id="GO:0033952">
    <property type="term" value="F:iota-carrageenase activity"/>
    <property type="evidence" value="ECO:0007669"/>
    <property type="project" value="UniProtKB-EC"/>
</dbReference>
<dbReference type="GO" id="GO:0071555">
    <property type="term" value="P:cell wall organization"/>
    <property type="evidence" value="ECO:0007669"/>
    <property type="project" value="UniProtKB-KW"/>
</dbReference>
<dbReference type="GO" id="GO:0000272">
    <property type="term" value="P:polysaccharide catabolic process"/>
    <property type="evidence" value="ECO:0007669"/>
    <property type="project" value="UniProtKB-KW"/>
</dbReference>
<dbReference type="Gene3D" id="2.160.20.10">
    <property type="entry name" value="Single-stranded right-handed beta-helix, Pectin lyase-like"/>
    <property type="match status" value="1"/>
</dbReference>
<dbReference type="InterPro" id="IPR012334">
    <property type="entry name" value="Pectin_lyas_fold"/>
</dbReference>
<dbReference type="InterPro" id="IPR011050">
    <property type="entry name" value="Pectin_lyase_fold/virulence"/>
</dbReference>
<dbReference type="SUPFAM" id="SSF51126">
    <property type="entry name" value="Pectin lyase-like"/>
    <property type="match status" value="1"/>
</dbReference>
<feature type="signal peptide" evidence="2">
    <location>
        <begin position="1"/>
        <end position="19"/>
    </location>
</feature>
<feature type="chain" id="PRO_5000065975" description="Iota-carrageenase" evidence="2">
    <location>
        <begin position="20"/>
        <end position="491"/>
    </location>
</feature>
<feature type="disulfide bond" evidence="1">
    <location>
        <begin position="422"/>
        <end position="490"/>
    </location>
</feature>
<protein>
    <recommendedName>
        <fullName>Iota-carrageenase</fullName>
        <ecNumber>3.2.1.157</ecNumber>
    </recommendedName>
</protein>
<keyword id="KW-0119">Carbohydrate metabolism</keyword>
<keyword id="KW-0961">Cell wall biogenesis/degradation</keyword>
<keyword id="KW-0903">Direct protein sequencing</keyword>
<keyword id="KW-1015">Disulfide bond</keyword>
<keyword id="KW-0326">Glycosidase</keyword>
<keyword id="KW-0378">Hydrolase</keyword>
<keyword id="KW-0624">Polysaccharide degradation</keyword>
<keyword id="KW-1185">Reference proteome</keyword>
<keyword id="KW-0964">Secreted</keyword>
<keyword id="KW-0732">Signal</keyword>
<comment type="function">
    <text evidence="1 3">Hydrolyzes iota-carrageenans, sulfated 1,3-alpha-1,4-beta galactans from red algal cell walls, with an inversion of anomeric configuration. Also active against hybrid iota-/nu-carrageenan, not active against kappa- or lambda-carrageenans.</text>
</comment>
<comment type="catalytic activity">
    <reaction evidence="3">
        <text>Endohydrolysis of 1,4-beta-D-linkages between D-galactose 4-sulfate and 3,6-anhydro-D-galactose-2-sulfate in iota-carrageenans.</text>
        <dbReference type="EC" id="3.2.1.157"/>
    </reaction>
</comment>
<comment type="subcellular location">
    <subcellularLocation>
        <location evidence="3">Secreted</location>
    </subcellularLocation>
</comment>
<comment type="similarity">
    <text evidence="4">Belongs to the glycosyl hydrolase 82 family.</text>
</comment>
<gene>
    <name evidence="5" type="primary">cgiA</name>
    <name type="ordered locus">zobellia_4265</name>
</gene>
<name>CGIA_ZOBGA</name>
<accession>Q9F284</accession>
<accession>G0KZI8</accession>
<reference evidence="4 5" key="1">
    <citation type="journal article" date="2000" name="J. Biol. Chem.">
        <title>iota-Carrageenases constitute a novel family of glycoside hydrolases, unrelated to that of kappa-carrageenases.</title>
        <authorList>
            <person name="Barbeyron T."/>
            <person name="Michel G."/>
            <person name="Potin P."/>
            <person name="Henrissat B."/>
            <person name="Kloareg B."/>
        </authorList>
    </citation>
    <scope>NUCLEOTIDE SEQUENCE [GENOMIC DNA]</scope>
    <scope>PROTEIN SEQUENCE OF 39-48 AND 395-399</scope>
    <scope>FUNCTION</scope>
    <scope>CATALYTIC ACTIVITY</scope>
    <scope>SUBCELLULAR LOCATION</scope>
    <source>
        <strain evidence="5">DSM 12802 / CCUG 47099 / CIP 106680 / KCTC 12921 / NCIMB 13871 / Dsij</strain>
    </source>
</reference>
<reference key="2">
    <citation type="submission" date="2009-07" db="EMBL/GenBank/DDBJ databases">
        <title>Complete genome sequence of Zobellia galactanivorans Dsij.</title>
        <authorList>
            <consortium name="Genoscope - CEA"/>
        </authorList>
    </citation>
    <scope>NUCLEOTIDE SEQUENCE [LARGE SCALE GENOMIC DNA]</scope>
    <source>
        <strain>DSM 12802 / CCUG 47099 / CIP 106680 / KCTC 12921 / NCIMB 13871 / Dsij</strain>
    </source>
</reference>
<proteinExistence type="evidence at protein level"/>